<gene>
    <name type="primary">lukS</name>
</gene>
<evidence type="ECO:0000269" key="1">
    <source>
    </source>
</evidence>
<evidence type="ECO:0000305" key="2"/>
<feature type="signal peptide" evidence="1">
    <location>
        <begin position="1"/>
        <end position="29"/>
    </location>
</feature>
<feature type="chain" id="PRO_0000018428" description="Leukocidin-S subunit">
    <location>
        <begin position="30"/>
        <end position="315"/>
    </location>
</feature>
<dbReference type="EMBL" id="M81346">
    <property type="protein sequence ID" value="AAA26654.1"/>
    <property type="molecule type" value="Genomic_DNA"/>
</dbReference>
<dbReference type="EMBL" id="S65052">
    <property type="protein sequence ID" value="AAC60445.1"/>
    <property type="molecule type" value="Genomic_DNA"/>
</dbReference>
<dbReference type="PIR" id="JN0626">
    <property type="entry name" value="JN0626"/>
</dbReference>
<dbReference type="SMR" id="P31716"/>
<dbReference type="PRO" id="PR:P31716"/>
<dbReference type="GO" id="GO:0005576">
    <property type="term" value="C:extracellular region"/>
    <property type="evidence" value="ECO:0007669"/>
    <property type="project" value="InterPro"/>
</dbReference>
<dbReference type="GO" id="GO:0090729">
    <property type="term" value="F:toxin activity"/>
    <property type="evidence" value="ECO:0007669"/>
    <property type="project" value="UniProtKB-KW"/>
</dbReference>
<dbReference type="GO" id="GO:0051715">
    <property type="term" value="P:cytolysis in another organism"/>
    <property type="evidence" value="ECO:0007669"/>
    <property type="project" value="InterPro"/>
</dbReference>
<dbReference type="Gene3D" id="2.70.240.10">
    <property type="entry name" value="Leukocidin/porin MspA"/>
    <property type="match status" value="1"/>
</dbReference>
<dbReference type="InterPro" id="IPR003963">
    <property type="entry name" value="Bi-component_toxin_staph"/>
</dbReference>
<dbReference type="InterPro" id="IPR016183">
    <property type="entry name" value="Leukocidin/Hemolysin_toxin"/>
</dbReference>
<dbReference type="InterPro" id="IPR036435">
    <property type="entry name" value="Leukocidin/porin_MspA_sf"/>
</dbReference>
<dbReference type="NCBIfam" id="TIGR01002">
    <property type="entry name" value="hlyII"/>
    <property type="match status" value="1"/>
</dbReference>
<dbReference type="Pfam" id="PF07968">
    <property type="entry name" value="Leukocidin"/>
    <property type="match status" value="1"/>
</dbReference>
<dbReference type="PRINTS" id="PR01468">
    <property type="entry name" value="BICOMPNTOXIN"/>
</dbReference>
<dbReference type="SUPFAM" id="SSF56959">
    <property type="entry name" value="Leukocidin-like"/>
    <property type="match status" value="1"/>
</dbReference>
<organism>
    <name type="scientific">Staphylococcus aureus</name>
    <dbReference type="NCBI Taxonomy" id="1280"/>
    <lineage>
        <taxon>Bacteria</taxon>
        <taxon>Bacillati</taxon>
        <taxon>Bacillota</taxon>
        <taxon>Bacilli</taxon>
        <taxon>Bacillales</taxon>
        <taxon>Staphylococcaceae</taxon>
        <taxon>Staphylococcus</taxon>
    </lineage>
</organism>
<reference key="1">
    <citation type="journal article" date="1991" name="Biochem. Biophys. Res. Commun.">
        <title>Nucleotide sequence of leukocidin S-component gene (lukS) from methicillin resistant Staphylococcus aureus.</title>
        <authorList>
            <person name="Rahman A."/>
            <person name="Izaki K."/>
            <person name="Kato I."/>
            <person name="Kamio Y."/>
        </authorList>
    </citation>
    <scope>NUCLEOTIDE SEQUENCE [GENOMIC DNA]</scope>
    <scope>PROTEIN SEQUENCE OF 30-79</scope>
    <source>
        <strain>NO.4</strain>
    </source>
</reference>
<reference key="2">
    <citation type="journal article" date="1993" name="Biosci. Biotechnol. Biochem.">
        <title>Gamma-hemolysin genes in the same family with lukF and lukS genes in methicillin resistant Staphylococcus aureus.</title>
        <authorList>
            <person name="Rahman A."/>
            <person name="Izaki K."/>
            <person name="Kamio Y."/>
        </authorList>
    </citation>
    <scope>NUCLEOTIDE SEQUENCE [GENOMIC DNA]</scope>
    <source>
        <strain>MRSA NO. 4</strain>
    </source>
</reference>
<comment type="function">
    <text>Leukocidin causes cytotoxic changes in polymorphonuclear leukocytes.</text>
</comment>
<comment type="subunit">
    <text>Leukocidin consists of two protein components: F and S.</text>
</comment>
<comment type="similarity">
    <text evidence="2">Belongs to the aerolysin family.</text>
</comment>
<accession>P31716</accession>
<name>LUKS_STAAU</name>
<sequence length="315" mass="35557">MLKNKILATTLSVSLLAPLANPLLENAKAANDTEDIGKGSDIEIIKRTEDKTSNKWGVTQNIQFDFVKDTKYNKDALILKMQGFISSRTTYYNYKKTNHVKAMRWPFQYNIGLKTNDKYVSLINYLPKNKIESTNVSQTLGYNIGGNFQSAPSLGGNGSFNYSKSISYTQQNYVSEVEQQNSKSVLWGVKANSFATESGQKSAFDSDLFVGYKPHSKDPRDYFVPDSELPPLVQSGFNPSFIATVSHEKGSSDTSEFEITYGRNMDVTHAIKRSTHYGNSYLDGHRVHNAFVNRNYTVKYEVNWKTHEIKVKGQN</sequence>
<keyword id="KW-0204">Cytolysis</keyword>
<keyword id="KW-0903">Direct protein sequencing</keyword>
<keyword id="KW-0354">Hemolysis</keyword>
<keyword id="KW-0732">Signal</keyword>
<keyword id="KW-0800">Toxin</keyword>
<keyword id="KW-0843">Virulence</keyword>
<protein>
    <recommendedName>
        <fullName>Leukocidin-S subunit</fullName>
    </recommendedName>
</protein>
<proteinExistence type="evidence at protein level"/>